<dbReference type="EMBL" id="AE014134">
    <property type="protein sequence ID" value="AAF52447.2"/>
    <property type="molecule type" value="Genomic_DNA"/>
</dbReference>
<dbReference type="EMBL" id="BT015178">
    <property type="protein sequence ID" value="AAT94407.1"/>
    <property type="molecule type" value="mRNA"/>
</dbReference>
<dbReference type="EMBL" id="AY069800">
    <property type="protein sequence ID" value="AAL39945.1"/>
    <property type="molecule type" value="mRNA"/>
</dbReference>
<dbReference type="RefSeq" id="NP_609079.2">
    <property type="nucleotide sequence ID" value="NM_135235.3"/>
</dbReference>
<dbReference type="SMR" id="Q9VM75"/>
<dbReference type="BioGRID" id="60111">
    <property type="interactions" value="7"/>
</dbReference>
<dbReference type="DIP" id="DIP-18874N"/>
<dbReference type="FunCoup" id="Q9VM75">
    <property type="interactions" value="2016"/>
</dbReference>
<dbReference type="IntAct" id="Q9VM75">
    <property type="interactions" value="10"/>
</dbReference>
<dbReference type="STRING" id="7227.FBpp0078971"/>
<dbReference type="PaxDb" id="7227-FBpp0078971"/>
<dbReference type="EnsemblMetazoa" id="FBtr0079343">
    <property type="protein sequence ID" value="FBpp0078971"/>
    <property type="gene ID" value="FBgn0086451"/>
</dbReference>
<dbReference type="GeneID" id="33960"/>
<dbReference type="KEGG" id="dme:Dmel_CG10805"/>
<dbReference type="AGR" id="FB:FBgn0086451"/>
<dbReference type="FlyBase" id="FBgn0086451">
    <property type="gene designation" value="Heatr1"/>
</dbReference>
<dbReference type="VEuPathDB" id="VectorBase:FBgn0086451"/>
<dbReference type="eggNOG" id="KOG1837">
    <property type="taxonomic scope" value="Eukaryota"/>
</dbReference>
<dbReference type="GeneTree" id="ENSGT00390000015845"/>
<dbReference type="HOGENOM" id="CLU_001128_3_0_1"/>
<dbReference type="InParanoid" id="Q9VM75"/>
<dbReference type="OMA" id="NDVMWKQ"/>
<dbReference type="OrthoDB" id="31183at2759"/>
<dbReference type="PhylomeDB" id="Q9VM75"/>
<dbReference type="Reactome" id="R-DME-6791226">
    <property type="pathway name" value="Major pathway of rRNA processing in the nucleolus and cytosol"/>
</dbReference>
<dbReference type="SignaLink" id="Q9VM75"/>
<dbReference type="BioGRID-ORCS" id="33960">
    <property type="hits" value="0 hits in 1 CRISPR screen"/>
</dbReference>
<dbReference type="GenomeRNAi" id="33960"/>
<dbReference type="PRO" id="PR:Q9VM75"/>
<dbReference type="Proteomes" id="UP000000803">
    <property type="component" value="Chromosome 2L"/>
</dbReference>
<dbReference type="Bgee" id="FBgn0086451">
    <property type="expression patterns" value="Expressed in egg chamber and 35 other cell types or tissues"/>
</dbReference>
<dbReference type="GO" id="GO:0030686">
    <property type="term" value="C:90S preribosome"/>
    <property type="evidence" value="ECO:0000318"/>
    <property type="project" value="GO_Central"/>
</dbReference>
<dbReference type="GO" id="GO:0005739">
    <property type="term" value="C:mitochondrion"/>
    <property type="evidence" value="ECO:0000250"/>
    <property type="project" value="FlyBase"/>
</dbReference>
<dbReference type="GO" id="GO:0032040">
    <property type="term" value="C:small-subunit processome"/>
    <property type="evidence" value="ECO:0000250"/>
    <property type="project" value="UniProtKB"/>
</dbReference>
<dbReference type="GO" id="GO:0034455">
    <property type="term" value="C:t-UTP complex"/>
    <property type="evidence" value="ECO:0000318"/>
    <property type="project" value="GO_Central"/>
</dbReference>
<dbReference type="GO" id="GO:0030515">
    <property type="term" value="F:snoRNA binding"/>
    <property type="evidence" value="ECO:0000318"/>
    <property type="project" value="GO_Central"/>
</dbReference>
<dbReference type="GO" id="GO:0000462">
    <property type="term" value="P:maturation of SSU-rRNA from tricistronic rRNA transcript (SSU-rRNA, 5.8S rRNA, LSU-rRNA)"/>
    <property type="evidence" value="ECO:0000318"/>
    <property type="project" value="GO_Central"/>
</dbReference>
<dbReference type="GO" id="GO:0061351">
    <property type="term" value="P:neural precursor cell proliferation"/>
    <property type="evidence" value="ECO:0000315"/>
    <property type="project" value="UniProtKB"/>
</dbReference>
<dbReference type="GO" id="GO:0045943">
    <property type="term" value="P:positive regulation of transcription by RNA polymerase I"/>
    <property type="evidence" value="ECO:0000318"/>
    <property type="project" value="GO_Central"/>
</dbReference>
<dbReference type="GO" id="GO:0042274">
    <property type="term" value="P:ribosomal small subunit biogenesis"/>
    <property type="evidence" value="ECO:0000250"/>
    <property type="project" value="UniProtKB"/>
</dbReference>
<dbReference type="GO" id="GO:0016072">
    <property type="term" value="P:rRNA metabolic process"/>
    <property type="evidence" value="ECO:0000315"/>
    <property type="project" value="UniProtKB"/>
</dbReference>
<dbReference type="FunFam" id="1.25.10.10:FF:000821">
    <property type="entry name" value="Heatr1 protein"/>
    <property type="match status" value="1"/>
</dbReference>
<dbReference type="Gene3D" id="1.25.10.10">
    <property type="entry name" value="Leucine-rich Repeat Variant"/>
    <property type="match status" value="1"/>
</dbReference>
<dbReference type="InterPro" id="IPR011989">
    <property type="entry name" value="ARM-like"/>
</dbReference>
<dbReference type="InterPro" id="IPR016024">
    <property type="entry name" value="ARM-type_fold"/>
</dbReference>
<dbReference type="InterPro" id="IPR012954">
    <property type="entry name" value="BP28_C_dom"/>
</dbReference>
<dbReference type="InterPro" id="IPR056473">
    <property type="entry name" value="HEAT_Utp10/HEAT1"/>
</dbReference>
<dbReference type="InterPro" id="IPR022125">
    <property type="entry name" value="U3snoRNP10_N"/>
</dbReference>
<dbReference type="InterPro" id="IPR040191">
    <property type="entry name" value="UTP10"/>
</dbReference>
<dbReference type="PANTHER" id="PTHR13457">
    <property type="entry name" value="BAP28"/>
    <property type="match status" value="1"/>
</dbReference>
<dbReference type="PANTHER" id="PTHR13457:SF1">
    <property type="entry name" value="HEAT REPEAT-CONTAINING PROTEIN 1"/>
    <property type="match status" value="1"/>
</dbReference>
<dbReference type="Pfam" id="PF08146">
    <property type="entry name" value="BP28CT"/>
    <property type="match status" value="1"/>
</dbReference>
<dbReference type="Pfam" id="PF23243">
    <property type="entry name" value="HEAT_HEATR1"/>
    <property type="match status" value="1"/>
</dbReference>
<dbReference type="Pfam" id="PF12397">
    <property type="entry name" value="U3snoRNP10"/>
    <property type="match status" value="1"/>
</dbReference>
<dbReference type="SMART" id="SM01036">
    <property type="entry name" value="BP28CT"/>
    <property type="match status" value="1"/>
</dbReference>
<dbReference type="SUPFAM" id="SSF48371">
    <property type="entry name" value="ARM repeat"/>
    <property type="match status" value="2"/>
</dbReference>
<gene>
    <name evidence="4 6" type="primary">Heatr1</name>
    <name evidence="6" type="synonym">l(2)k09022</name>
    <name evidence="6" type="ORF">CG10805</name>
</gene>
<organism evidence="7">
    <name type="scientific">Drosophila melanogaster</name>
    <name type="common">Fruit fly</name>
    <dbReference type="NCBI Taxonomy" id="7227"/>
    <lineage>
        <taxon>Eukaryota</taxon>
        <taxon>Metazoa</taxon>
        <taxon>Ecdysozoa</taxon>
        <taxon>Arthropoda</taxon>
        <taxon>Hexapoda</taxon>
        <taxon>Insecta</taxon>
        <taxon>Pterygota</taxon>
        <taxon>Neoptera</taxon>
        <taxon>Endopterygota</taxon>
        <taxon>Diptera</taxon>
        <taxon>Brachycera</taxon>
        <taxon>Muscomorpha</taxon>
        <taxon>Ephydroidea</taxon>
        <taxon>Drosophilidae</taxon>
        <taxon>Drosophila</taxon>
        <taxon>Sophophora</taxon>
    </lineage>
</organism>
<protein>
    <recommendedName>
        <fullName evidence="5">HEAT repeat-containing protein 1 homolog</fullName>
    </recommendedName>
</protein>
<evidence type="ECO:0000250" key="1">
    <source>
        <dbReference type="UniProtKB" id="Q9H583"/>
    </source>
</evidence>
<evidence type="ECO:0000255" key="2">
    <source>
        <dbReference type="PROSITE-ProRule" id="PRU00103"/>
    </source>
</evidence>
<evidence type="ECO:0000269" key="3">
    <source>
    </source>
</evidence>
<evidence type="ECO:0000303" key="4">
    <source>
    </source>
</evidence>
<evidence type="ECO:0000305" key="5"/>
<evidence type="ECO:0000312" key="6">
    <source>
        <dbReference type="FlyBase" id="FBgn0086451"/>
    </source>
</evidence>
<evidence type="ECO:0000312" key="7">
    <source>
        <dbReference type="Proteomes" id="UP000000803"/>
    </source>
</evidence>
<feature type="chain" id="PRO_0000186204" description="HEAT repeat-containing protein 1 homolog">
    <location>
        <begin position="1"/>
        <end position="2096"/>
    </location>
</feature>
<feature type="repeat" description="HEAT" evidence="2">
    <location>
        <begin position="2058"/>
        <end position="2096"/>
    </location>
</feature>
<feature type="sequence conflict" description="In Ref. 3; AAT94407 and 4; AAL39945." evidence="5" ref="3 4">
    <original>Q</original>
    <variation>P</variation>
    <location>
        <position position="748"/>
    </location>
</feature>
<feature type="sequence conflict" description="In Ref. 3; AAT94407 and 4; AAL39945." evidence="5" ref="3 4">
    <original>E</original>
    <variation>D</variation>
    <location>
        <position position="831"/>
    </location>
</feature>
<feature type="sequence conflict" description="In Ref. 3; AAT94407 and 4; AAL39945." evidence="5" ref="3 4">
    <original>I</original>
    <variation>T</variation>
    <location>
        <position position="902"/>
    </location>
</feature>
<feature type="sequence conflict" description="In Ref. 3; AAT94407." evidence="5" ref="3">
    <original>Q</original>
    <variation>H</variation>
    <location>
        <position position="1019"/>
    </location>
</feature>
<feature type="sequence conflict" description="In Ref. 3; AAT94407 and 4; AAL39945." evidence="5" ref="3 4">
    <original>V</original>
    <variation>I</variation>
    <location>
        <position position="1184"/>
    </location>
</feature>
<feature type="sequence conflict" description="In Ref. 3; AAT94407 and 4; AAL39945." evidence="5" ref="3 4">
    <original>I</original>
    <variation>L</variation>
    <location>
        <position position="1545"/>
    </location>
</feature>
<feature type="sequence conflict" description="In Ref. 3; AAT94407 and 4; AAL39945." evidence="5" ref="3 4">
    <original>S</original>
    <variation>T</variation>
    <location>
        <position position="1574"/>
    </location>
</feature>
<feature type="sequence conflict" description="In Ref. 3; AAT94407 and 4; AAL39945." evidence="5" ref="3 4">
    <original>E</original>
    <variation>Q</variation>
    <location>
        <position position="1602"/>
    </location>
</feature>
<feature type="sequence conflict" description="In Ref. 3; AAT94407 and 4; AAL39945." evidence="5" ref="3 4">
    <original>L</original>
    <variation>F</variation>
    <location>
        <position position="1626"/>
    </location>
</feature>
<reference key="1">
    <citation type="journal article" date="2000" name="Science">
        <title>The genome sequence of Drosophila melanogaster.</title>
        <authorList>
            <person name="Adams M.D."/>
            <person name="Celniker S.E."/>
            <person name="Holt R.A."/>
            <person name="Evans C.A."/>
            <person name="Gocayne J.D."/>
            <person name="Amanatides P.G."/>
            <person name="Scherer S.E."/>
            <person name="Li P.W."/>
            <person name="Hoskins R.A."/>
            <person name="Galle R.F."/>
            <person name="George R.A."/>
            <person name="Lewis S.E."/>
            <person name="Richards S."/>
            <person name="Ashburner M."/>
            <person name="Henderson S.N."/>
            <person name="Sutton G.G."/>
            <person name="Wortman J.R."/>
            <person name="Yandell M.D."/>
            <person name="Zhang Q."/>
            <person name="Chen L.X."/>
            <person name="Brandon R.C."/>
            <person name="Rogers Y.-H.C."/>
            <person name="Blazej R.G."/>
            <person name="Champe M."/>
            <person name="Pfeiffer B.D."/>
            <person name="Wan K.H."/>
            <person name="Doyle C."/>
            <person name="Baxter E.G."/>
            <person name="Helt G."/>
            <person name="Nelson C.R."/>
            <person name="Miklos G.L.G."/>
            <person name="Abril J.F."/>
            <person name="Agbayani A."/>
            <person name="An H.-J."/>
            <person name="Andrews-Pfannkoch C."/>
            <person name="Baldwin D."/>
            <person name="Ballew R.M."/>
            <person name="Basu A."/>
            <person name="Baxendale J."/>
            <person name="Bayraktaroglu L."/>
            <person name="Beasley E.M."/>
            <person name="Beeson K.Y."/>
            <person name="Benos P.V."/>
            <person name="Berman B.P."/>
            <person name="Bhandari D."/>
            <person name="Bolshakov S."/>
            <person name="Borkova D."/>
            <person name="Botchan M.R."/>
            <person name="Bouck J."/>
            <person name="Brokstein P."/>
            <person name="Brottier P."/>
            <person name="Burtis K.C."/>
            <person name="Busam D.A."/>
            <person name="Butler H."/>
            <person name="Cadieu E."/>
            <person name="Center A."/>
            <person name="Chandra I."/>
            <person name="Cherry J.M."/>
            <person name="Cawley S."/>
            <person name="Dahlke C."/>
            <person name="Davenport L.B."/>
            <person name="Davies P."/>
            <person name="de Pablos B."/>
            <person name="Delcher A."/>
            <person name="Deng Z."/>
            <person name="Mays A.D."/>
            <person name="Dew I."/>
            <person name="Dietz S.M."/>
            <person name="Dodson K."/>
            <person name="Doup L.E."/>
            <person name="Downes M."/>
            <person name="Dugan-Rocha S."/>
            <person name="Dunkov B.C."/>
            <person name="Dunn P."/>
            <person name="Durbin K.J."/>
            <person name="Evangelista C.C."/>
            <person name="Ferraz C."/>
            <person name="Ferriera S."/>
            <person name="Fleischmann W."/>
            <person name="Fosler C."/>
            <person name="Gabrielian A.E."/>
            <person name="Garg N.S."/>
            <person name="Gelbart W.M."/>
            <person name="Glasser K."/>
            <person name="Glodek A."/>
            <person name="Gong F."/>
            <person name="Gorrell J.H."/>
            <person name="Gu Z."/>
            <person name="Guan P."/>
            <person name="Harris M."/>
            <person name="Harris N.L."/>
            <person name="Harvey D.A."/>
            <person name="Heiman T.J."/>
            <person name="Hernandez J.R."/>
            <person name="Houck J."/>
            <person name="Hostin D."/>
            <person name="Houston K.A."/>
            <person name="Howland T.J."/>
            <person name="Wei M.-H."/>
            <person name="Ibegwam C."/>
            <person name="Jalali M."/>
            <person name="Kalush F."/>
            <person name="Karpen G.H."/>
            <person name="Ke Z."/>
            <person name="Kennison J.A."/>
            <person name="Ketchum K.A."/>
            <person name="Kimmel B.E."/>
            <person name="Kodira C.D."/>
            <person name="Kraft C.L."/>
            <person name="Kravitz S."/>
            <person name="Kulp D."/>
            <person name="Lai Z."/>
            <person name="Lasko P."/>
            <person name="Lei Y."/>
            <person name="Levitsky A.A."/>
            <person name="Li J.H."/>
            <person name="Li Z."/>
            <person name="Liang Y."/>
            <person name="Lin X."/>
            <person name="Liu X."/>
            <person name="Mattei B."/>
            <person name="McIntosh T.C."/>
            <person name="McLeod M.P."/>
            <person name="McPherson D."/>
            <person name="Merkulov G."/>
            <person name="Milshina N.V."/>
            <person name="Mobarry C."/>
            <person name="Morris J."/>
            <person name="Moshrefi A."/>
            <person name="Mount S.M."/>
            <person name="Moy M."/>
            <person name="Murphy B."/>
            <person name="Murphy L."/>
            <person name="Muzny D.M."/>
            <person name="Nelson D.L."/>
            <person name="Nelson D.R."/>
            <person name="Nelson K.A."/>
            <person name="Nixon K."/>
            <person name="Nusskern D.R."/>
            <person name="Pacleb J.M."/>
            <person name="Palazzolo M."/>
            <person name="Pittman G.S."/>
            <person name="Pan S."/>
            <person name="Pollard J."/>
            <person name="Puri V."/>
            <person name="Reese M.G."/>
            <person name="Reinert K."/>
            <person name="Remington K."/>
            <person name="Saunders R.D.C."/>
            <person name="Scheeler F."/>
            <person name="Shen H."/>
            <person name="Shue B.C."/>
            <person name="Siden-Kiamos I."/>
            <person name="Simpson M."/>
            <person name="Skupski M.P."/>
            <person name="Smith T.J."/>
            <person name="Spier E."/>
            <person name="Spradling A.C."/>
            <person name="Stapleton M."/>
            <person name="Strong R."/>
            <person name="Sun E."/>
            <person name="Svirskas R."/>
            <person name="Tector C."/>
            <person name="Turner R."/>
            <person name="Venter E."/>
            <person name="Wang A.H."/>
            <person name="Wang X."/>
            <person name="Wang Z.-Y."/>
            <person name="Wassarman D.A."/>
            <person name="Weinstock G.M."/>
            <person name="Weissenbach J."/>
            <person name="Williams S.M."/>
            <person name="Woodage T."/>
            <person name="Worley K.C."/>
            <person name="Wu D."/>
            <person name="Yang S."/>
            <person name="Yao Q.A."/>
            <person name="Ye J."/>
            <person name="Yeh R.-F."/>
            <person name="Zaveri J.S."/>
            <person name="Zhan M."/>
            <person name="Zhang G."/>
            <person name="Zhao Q."/>
            <person name="Zheng L."/>
            <person name="Zheng X.H."/>
            <person name="Zhong F.N."/>
            <person name="Zhong W."/>
            <person name="Zhou X."/>
            <person name="Zhu S.C."/>
            <person name="Zhu X."/>
            <person name="Smith H.O."/>
            <person name="Gibbs R.A."/>
            <person name="Myers E.W."/>
            <person name="Rubin G.M."/>
            <person name="Venter J.C."/>
        </authorList>
    </citation>
    <scope>NUCLEOTIDE SEQUENCE [LARGE SCALE GENOMIC DNA]</scope>
    <source>
        <strain>Berkeley</strain>
    </source>
</reference>
<reference key="2">
    <citation type="journal article" date="2002" name="Genome Biol.">
        <title>Annotation of the Drosophila melanogaster euchromatic genome: a systematic review.</title>
        <authorList>
            <person name="Misra S."/>
            <person name="Crosby M.A."/>
            <person name="Mungall C.J."/>
            <person name="Matthews B.B."/>
            <person name="Campbell K.S."/>
            <person name="Hradecky P."/>
            <person name="Huang Y."/>
            <person name="Kaminker J.S."/>
            <person name="Millburn G.H."/>
            <person name="Prochnik S.E."/>
            <person name="Smith C.D."/>
            <person name="Tupy J.L."/>
            <person name="Whitfield E.J."/>
            <person name="Bayraktaroglu L."/>
            <person name="Berman B.P."/>
            <person name="Bettencourt B.R."/>
            <person name="Celniker S.E."/>
            <person name="de Grey A.D.N.J."/>
            <person name="Drysdale R.A."/>
            <person name="Harris N.L."/>
            <person name="Richter J."/>
            <person name="Russo S."/>
            <person name="Schroeder A.J."/>
            <person name="Shu S.Q."/>
            <person name="Stapleton M."/>
            <person name="Yamada C."/>
            <person name="Ashburner M."/>
            <person name="Gelbart W.M."/>
            <person name="Rubin G.M."/>
            <person name="Lewis S.E."/>
        </authorList>
    </citation>
    <scope>GENOME REANNOTATION</scope>
    <source>
        <strain>Berkeley</strain>
    </source>
</reference>
<reference key="3">
    <citation type="submission" date="2004-08" db="EMBL/GenBank/DDBJ databases">
        <authorList>
            <person name="Stapleton M."/>
            <person name="Carlson J.W."/>
            <person name="Chavez C."/>
            <person name="Frise E."/>
            <person name="George R.A."/>
            <person name="Pacleb J.M."/>
            <person name="Park S."/>
            <person name="Wan K.H."/>
            <person name="Yu C."/>
            <person name="Rubin G.M."/>
            <person name="Celniker S.E."/>
        </authorList>
    </citation>
    <scope>NUCLEOTIDE SEQUENCE [LARGE SCALE MRNA]</scope>
    <source>
        <strain>Berkeley</strain>
        <tissue>Embryo</tissue>
    </source>
</reference>
<reference key="4">
    <citation type="journal article" date="2002" name="Genome Biol.">
        <title>A Drosophila full-length cDNA resource.</title>
        <authorList>
            <person name="Stapleton M."/>
            <person name="Carlson J.W."/>
            <person name="Brokstein P."/>
            <person name="Yu C."/>
            <person name="Champe M."/>
            <person name="George R.A."/>
            <person name="Guarin H."/>
            <person name="Kronmiller B."/>
            <person name="Pacleb J.M."/>
            <person name="Park S."/>
            <person name="Wan K.H."/>
            <person name="Rubin G.M."/>
            <person name="Celniker S.E."/>
        </authorList>
    </citation>
    <scope>NUCLEOTIDE SEQUENCE [LARGE SCALE MRNA] OF 381-2096</scope>
    <source>
        <strain>Berkeley</strain>
        <tissue>Embryo</tissue>
    </source>
</reference>
<reference key="5">
    <citation type="journal article" date="2024" name="EMBO Rep.">
        <title>Ribogenesis boosts controlled by HEATR1-MYC interplay promote transition into brain tumour growth.</title>
        <authorList>
            <person name="Diaz L.R."/>
            <person name="Gil-Ranedo J."/>
            <person name="Jaworek K.J."/>
            <person name="Nsek N."/>
            <person name="Marques J.P."/>
            <person name="Costa E."/>
            <person name="Hilton D.A."/>
            <person name="Bieluczyk H."/>
            <person name="Warrington O."/>
            <person name="Hanemann C.O."/>
            <person name="Futschik M.E."/>
            <person name="Bossing T."/>
            <person name="Barros C.S."/>
        </authorList>
    </citation>
    <scope>FUNCTION</scope>
    <scope>DISRUPTION PHENOTYPE</scope>
</reference>
<accession>Q9VM75</accession>
<accession>Q6AWS0</accession>
<accession>Q8T9E7</accession>
<keyword id="KW-0539">Nucleus</keyword>
<keyword id="KW-1185">Reference proteome</keyword>
<keyword id="KW-0687">Ribonucleoprotein</keyword>
<keyword id="KW-0690">Ribosome biogenesis</keyword>
<keyword id="KW-0698">rRNA processing</keyword>
<proteinExistence type="evidence at transcript level"/>
<sequence>MSTALAQQLQKLAAPQSSVTLADARSRASILFDPKEAATKDRRSIYEIGLTGLQELTDFNPAFKEFQLTLFDEATLTLERSVELPEINKMLDAAIAKFLRLLSPYLLLRPAHMAFEWLLRRFQVHEYNRSEVMALILPYHETMIFVQIVKTMRLRSSDGDWYWLRPLQRPGVPLAKTAIINRAASNPAFLGFICQSTQKAVKELGPRAHQLQAQINFYATVVVGALQTAKPLQDWHITTILESLLRGLISDNIDFMAAAYVIVAQLVSRTKLKSKVCNALLERVANCPFERLHSESLLLLVCIYGKQQAALPHFKPETILNLVGKKWLISTLSSLAKGNIAIQSICMPLMTGAVAAIRDDDASSNSCKLFLDNLLSEVPMPKPTAQQLINCFLDTYVETAIDAPEPMETNSNEDDDTIVIDSDDEIETEKTTFQAWYSTYLEKLERRYPEAFDLSVKEALRSKSSTSNRQKALKLALGFRLNTTDEKAKHAYEKLYHYSADWRLSAVQKLLQNLNVTKKRERSVKLLQECLPDRINDDSGAVVSTLLSLPTEELAEMLGPLPLAQTLCHLLYRAQSEKDEEWQPVVPLAVRHLTSALVSGSYDTNLVLLALMPLLFPGEALAEHQHKALRILLGSDFVSKVPFLAELKVSNKFSDFNVGEHRQHFLDIIASSNQELSSQERALLQSVEDHGGELYIQKASQLTHLLLLLTAYAKRELQPRESLHMLEKIGLYSRRLQFRVVNGSQNTQNCAPLQLYVDFLLTLVKNTKWTALASTPWNQMTDELRLCLRLLEIICAQVFSEKADQPERQEWTRALQQSLQLILPEAQDRLEVLSNFYVFERLPELWPRDSDYAVFRLQGFIILEAVLSNPKSQIDCGLVHVLRVANACGSPLQTLRVQAINILQLISNRKLVSHVEQLVRSLLQRKSELSMDHEQYALILYTILEPEKATAKERLVLSKLKRSVLALASDPKQSPICTASLLAALKHVNDENFLNELLPLGLDSLKTITAGEDNQNIKQLPWPHSEIYKSVIERFEGRVALNVLLRKDLAWKLFEDSFAQYDTYVQLEQKLQPLPCVLLNSLTPETFEQMHAKHKIALIKLIVESATNSDNDSIFLASHRLLKRCRLDCQPLVPILLEMANTKVEKKQPVKRRSVQATQLDLTSPYWKQGMTLLELLEHKKQLVGAELLIPPLFELLQACLTMEEHSAAEYPKQLILSSLLHCCQTAQSAGVQLVKAMPESSFRIELVVQSLRNTRNPQTQQHALLFLTHCAGMYPQQVLHKIVEIFTFVGSTVARHDDAFSLHIIHNVVESIIPILLLNTGHNELVIPVLKVFADICTDVPVHRRLPLYATLFRVLEPKEHLWQFLCIIFESQVLLEQVPQKVSTDKSRLDFARELTLMFEDPTVAIQTCIRLLDYLAKLPATKSSLSGGSGSSVLSTEQQLFDVRTRTFKQLRHYKYLIMDFLSGISSCNEWEKKMKRPDPNELLPYYQEFILKTLAYVGVLNGALEAASETPSLEKFWRVLANHAHDVLDNAIGLLAPQHFISVITELLKHDHVYVRIKVMDLLVTKLSPSSDYFQQSNAEHFGVLFAPLQEIINGILEGSSNSAQQAKLQQTALHALQLLALRHGRDYIEECRSLLATLTKITKRRANVPKAVVGNVVLTLVEICASLKAHALAQLPKFAPQLTELLKEQVHQMASLKQGPDYVCSTLVTALHKLFKALPLFLGPYLVDIIGGLARLSVQLENPQLLQDKRTQVLKQKLADVWSAVAQGVEVRILVPSCAKAFSSLLEQQAYDELGHLMQQLLLQSVRHNSAAQLQPVQDPLSELFLQALNFRLQVRGLGLQRQLVSDVEASITETFVTWILKLSETSFRPMYSRVHKWALESTSRETRLTYFLLTNRIAEALKSLFVLFASDFVEDSSRLLTEHNSIRPEFEVEEREDDVDLLMAILNTLHHVFLYCSEDFINDHRFNVLMPPLVNQLENDLVLGNESLQQVLSNCIAQFAVATNDVMWKQLNSQVLLKTRTSNPEVRILAFNSCVAIARKLGESYAALLPETVPFIAELLEDEHQRVEKNTRTGVQELETILGESVQKYL</sequence>
<comment type="function">
    <text evidence="1 3">Ribosome biogenesis factor; required for recruitment of Myc to nucleoli (PubMed:38225354). Involved in nucleolar processing of pre-18S ribosomal RNA. Required for optimal pre-ribosomal RNA transcription by RNA polymerase I. Part of the small subunit (SSU) processome, first precursor of the small eukaryotic ribosomal subunit. During the assembly of the SSU processome in the nucleolus, many ribosome biogenesis factors, an RNA chaperone and ribosomal proteins associate with the nascent pre-rRNA and work in concert to generate RNA folding, modifications, rearrangements and cleavage as well as targeted degradation of pre-ribosomal RNA by the RNA exosome (By similarity). Involved in neuronal-lineage cell proliferation during larval development (PubMed:38225354).</text>
</comment>
<comment type="subunit">
    <text evidence="1">Part of the small subunit (SSU) processome, composed of more than 70 proteins and the RNA chaperone small nucleolar RNA (snoRNA) U3 (By similarity). Interacts with MYC; the interaction is required for localization of MYC to the nucleolus (By similarity).</text>
</comment>
<comment type="subcellular location">
    <subcellularLocation>
        <location evidence="1">Nucleus</location>
        <location evidence="1">Nucleolus</location>
    </subcellularLocation>
</comment>
<comment type="disruption phenotype">
    <text evidence="3">RNAi-mediated knockdown has no effect on proliferation of neural stem cells (NSCs) during early larval development but inhibits proliferation of NSCs during late larval development (PubMed:38225354). RNAi-mediated knockdown in type II neuroblast stem cells prevents abnormal growth and proliferation of tumor initiating cells in brat-deficient individuals preventing brain tumor development (PubMed:38225354). RNAi-mediated knockdown in type II neuroblast stem cells slightly reduces the size of NSC nucleoli and prevents nucleoli enlargement in brat-deficient individuals (PubMed:38225354).</text>
</comment>
<comment type="similarity">
    <text evidence="5">Belongs to the HEATR1/UTP10 family.</text>
</comment>
<name>HEAT1_DROME</name>